<feature type="chain" id="PRO_0000363517" description="Pentatricopeptide repeat-containing protein At5g14080">
    <location>
        <begin position="1"/>
        <end position="634"/>
    </location>
</feature>
<feature type="repeat" description="PPR 1">
    <location>
        <begin position="81"/>
        <end position="115"/>
    </location>
</feature>
<feature type="repeat" description="PPR 2">
    <location>
        <begin position="116"/>
        <end position="150"/>
    </location>
</feature>
<feature type="repeat" description="PPR 3">
    <location>
        <begin position="151"/>
        <end position="185"/>
    </location>
</feature>
<feature type="repeat" description="PPR 4">
    <location>
        <begin position="186"/>
        <end position="220"/>
    </location>
</feature>
<feature type="repeat" description="PPR 5">
    <location>
        <begin position="222"/>
        <end position="256"/>
    </location>
</feature>
<feature type="repeat" description="PPR 6">
    <location>
        <begin position="257"/>
        <end position="291"/>
    </location>
</feature>
<feature type="repeat" description="PPR 7">
    <location>
        <begin position="292"/>
        <end position="326"/>
    </location>
</feature>
<feature type="repeat" description="PPR 8">
    <location>
        <begin position="327"/>
        <end position="360"/>
    </location>
</feature>
<feature type="repeat" description="PPR 9">
    <location>
        <begin position="361"/>
        <end position="395"/>
    </location>
</feature>
<feature type="repeat" description="PPR 10">
    <location>
        <begin position="396"/>
        <end position="430"/>
    </location>
</feature>
<feature type="repeat" description="PPR 11">
    <location>
        <begin position="431"/>
        <end position="465"/>
    </location>
</feature>
<feature type="repeat" description="PPR 12">
    <location>
        <begin position="466"/>
        <end position="500"/>
    </location>
</feature>
<feature type="repeat" description="PPR 13">
    <location>
        <begin position="501"/>
        <end position="535"/>
    </location>
</feature>
<feature type="sequence conflict" description="In Ref. 3; BX831119." evidence="1" ref="3">
    <original>S</original>
    <variation>F</variation>
    <location>
        <position position="602"/>
    </location>
</feature>
<feature type="sequence conflict" description="In Ref. 3; BX831119." evidence="1" ref="3">
    <original>D</original>
    <variation>N</variation>
    <location>
        <position position="622"/>
    </location>
</feature>
<organism>
    <name type="scientific">Arabidopsis thaliana</name>
    <name type="common">Mouse-ear cress</name>
    <dbReference type="NCBI Taxonomy" id="3702"/>
    <lineage>
        <taxon>Eukaryota</taxon>
        <taxon>Viridiplantae</taxon>
        <taxon>Streptophyta</taxon>
        <taxon>Embryophyta</taxon>
        <taxon>Tracheophyta</taxon>
        <taxon>Spermatophyta</taxon>
        <taxon>Magnoliopsida</taxon>
        <taxon>eudicotyledons</taxon>
        <taxon>Gunneridae</taxon>
        <taxon>Pentapetalae</taxon>
        <taxon>rosids</taxon>
        <taxon>malvids</taxon>
        <taxon>Brassicales</taxon>
        <taxon>Brassicaceae</taxon>
        <taxon>Camelineae</taxon>
        <taxon>Arabidopsis</taxon>
    </lineage>
</organism>
<keyword id="KW-1185">Reference proteome</keyword>
<keyword id="KW-0677">Repeat</keyword>
<protein>
    <recommendedName>
        <fullName>Pentatricopeptide repeat-containing protein At5g14080</fullName>
    </recommendedName>
</protein>
<accession>Q9FMU2</accession>
<evidence type="ECO:0000305" key="1"/>
<proteinExistence type="evidence at transcript level"/>
<gene>
    <name type="ordered locus">At5g14080</name>
    <name type="ORF">MUA22.8</name>
</gene>
<dbReference type="EMBL" id="AB007650">
    <property type="protein sequence ID" value="BAB08287.1"/>
    <property type="status" value="ALT_SEQ"/>
    <property type="molecule type" value="Genomic_DNA"/>
</dbReference>
<dbReference type="EMBL" id="CP002688">
    <property type="protein sequence ID" value="AED91985.1"/>
    <property type="molecule type" value="Genomic_DNA"/>
</dbReference>
<dbReference type="EMBL" id="BX831119">
    <property type="status" value="NOT_ANNOTATED_CDS"/>
    <property type="molecule type" value="mRNA"/>
</dbReference>
<dbReference type="EMBL" id="BX834008">
    <property type="status" value="NOT_ANNOTATED_CDS"/>
    <property type="molecule type" value="mRNA"/>
</dbReference>
<dbReference type="RefSeq" id="NP_196912.2">
    <property type="nucleotide sequence ID" value="NM_121411.4"/>
</dbReference>
<dbReference type="SMR" id="Q9FMU2"/>
<dbReference type="BioGRID" id="16535">
    <property type="interactions" value="1"/>
</dbReference>
<dbReference type="FunCoup" id="Q9FMU2">
    <property type="interactions" value="1490"/>
</dbReference>
<dbReference type="STRING" id="3702.Q9FMU2"/>
<dbReference type="iPTMnet" id="Q9FMU2"/>
<dbReference type="PaxDb" id="3702-AT5G14080.1"/>
<dbReference type="ProteomicsDB" id="249264"/>
<dbReference type="EnsemblPlants" id="AT5G14080.1">
    <property type="protein sequence ID" value="AT5G14080.1"/>
    <property type="gene ID" value="AT5G14080"/>
</dbReference>
<dbReference type="GeneID" id="831257"/>
<dbReference type="Gramene" id="AT5G14080.1">
    <property type="protein sequence ID" value="AT5G14080.1"/>
    <property type="gene ID" value="AT5G14080"/>
</dbReference>
<dbReference type="KEGG" id="ath:AT5G14080"/>
<dbReference type="Araport" id="AT5G14080"/>
<dbReference type="TAIR" id="AT5G14080"/>
<dbReference type="eggNOG" id="KOG4197">
    <property type="taxonomic scope" value="Eukaryota"/>
</dbReference>
<dbReference type="HOGENOM" id="CLU_002706_50_0_1"/>
<dbReference type="InParanoid" id="Q9FMU2"/>
<dbReference type="OMA" id="ICSVSEI"/>
<dbReference type="PhylomeDB" id="Q9FMU2"/>
<dbReference type="PRO" id="PR:Q9FMU2"/>
<dbReference type="Proteomes" id="UP000006548">
    <property type="component" value="Chromosome 5"/>
</dbReference>
<dbReference type="ExpressionAtlas" id="Q9FMU2">
    <property type="expression patterns" value="baseline and differential"/>
</dbReference>
<dbReference type="GO" id="GO:0009507">
    <property type="term" value="C:chloroplast"/>
    <property type="evidence" value="ECO:0007005"/>
    <property type="project" value="TAIR"/>
</dbReference>
<dbReference type="FunFam" id="1.25.40.10:FF:000910">
    <property type="entry name" value="Pentatricopeptide repeat-containing protein At5g14080"/>
    <property type="match status" value="1"/>
</dbReference>
<dbReference type="Gene3D" id="1.25.40.10">
    <property type="entry name" value="Tetratricopeptide repeat domain"/>
    <property type="match status" value="2"/>
</dbReference>
<dbReference type="InterPro" id="IPR002885">
    <property type="entry name" value="Pentatricopeptide_rpt"/>
</dbReference>
<dbReference type="InterPro" id="IPR011990">
    <property type="entry name" value="TPR-like_helical_dom_sf"/>
</dbReference>
<dbReference type="NCBIfam" id="TIGR00756">
    <property type="entry name" value="PPR"/>
    <property type="match status" value="3"/>
</dbReference>
<dbReference type="PANTHER" id="PTHR47938:SF35">
    <property type="entry name" value="PENTATRICOPEPTIDE REPEAT-CONTAINING PROTEIN 4, MITOCHONDRIAL-RELATED"/>
    <property type="match status" value="1"/>
</dbReference>
<dbReference type="PANTHER" id="PTHR47938">
    <property type="entry name" value="RESPIRATORY COMPLEX I CHAPERONE (CIA84), PUTATIVE (AFU_ORTHOLOGUE AFUA_2G06020)-RELATED"/>
    <property type="match status" value="1"/>
</dbReference>
<dbReference type="Pfam" id="PF01535">
    <property type="entry name" value="PPR"/>
    <property type="match status" value="2"/>
</dbReference>
<dbReference type="Pfam" id="PF12854">
    <property type="entry name" value="PPR_1"/>
    <property type="match status" value="1"/>
</dbReference>
<dbReference type="Pfam" id="PF13041">
    <property type="entry name" value="PPR_2"/>
    <property type="match status" value="1"/>
</dbReference>
<dbReference type="PROSITE" id="PS51375">
    <property type="entry name" value="PPR"/>
    <property type="match status" value="11"/>
</dbReference>
<comment type="similarity">
    <text evidence="1">Belongs to the PPR family. P subfamily.</text>
</comment>
<comment type="sequence caution" evidence="1">
    <conflict type="erroneous gene model prediction">
        <sequence resource="EMBL-CDS" id="BAB08287"/>
    </conflict>
</comment>
<comment type="sequence caution" evidence="1">
    <conflict type="miscellaneous discrepancy">
        <sequence resource="EMBL" id="BX834008"/>
    </conflict>
    <text>Sequencing errors.</text>
</comment>
<comment type="online information" name="Pentatricopeptide repeat proteins">
    <link uri="https://ppr.plantenergy.uwa.edu.au"/>
</comment>
<name>PP380_ARATH</name>
<sequence length="634" mass="71364">MRPATELAVRIGRELLKVSGSSRAARIWSPLIEQSLHGLGFRHSISPSLVARVIDPFLLNHHSLALGFFNWAAQQPGYSHDSISYHSIFKSLSLSRQFSAMDALFKQVKSNKILLDSSVYRSLIDTLVLGRKAQSAFWVLEEAFSTGQEIHPDVCNRLLAGLTSDGCYDYAQKLFVKMRHKGVSLNTLGFGVYIGWFCRSSETNQLLRLVDEVKKANLNINGSIIALLILHSLCKCSREMDAFYILEELRNIDCKPDFMAYRVIAEAFVVTGNLYERQVVLKKKRKLGVAPRSSDYRAFILDLISAKRLTEAKEVAEVIVSGKFPMDNDILDALIGSVSAVDPDSAVEFLVYMVSTGKLPAIRTLSKLSKNLCRHDKSDHLIKAYELLSSKGYFSELQSYSLMISFLCKAGRVRESYTALQEMKKEGLAPDVSLYNALIEACCKAEMIRPAKKLWDEMFVEGCKMNLTTYNVLIRKLSEEGEAEESLRLFDKMLERGIEPDETIYMSLIEGLCKETKIEAAMEVFRKCMERDHKTVTRRVLSEFVLNLCSNGHSGEASQLLREREHLEHTGAHVVLLKCVADAKEVEIGIRHMQWIKEVSPSLVHTISSDLLASFCSSSDPDSILPFIRAIENT</sequence>
<reference key="1">
    <citation type="journal article" date="1997" name="DNA Res.">
        <title>Structural analysis of Arabidopsis thaliana chromosome 5. III. Sequence features of the regions of 1,191,918 bp covered by seventeen physically assigned P1 clones.</title>
        <authorList>
            <person name="Nakamura Y."/>
            <person name="Sato S."/>
            <person name="Kaneko T."/>
            <person name="Kotani H."/>
            <person name="Asamizu E."/>
            <person name="Miyajima N."/>
            <person name="Tabata S."/>
        </authorList>
    </citation>
    <scope>NUCLEOTIDE SEQUENCE [LARGE SCALE GENOMIC DNA]</scope>
    <source>
        <strain>cv. Columbia</strain>
    </source>
</reference>
<reference key="2">
    <citation type="journal article" date="2017" name="Plant J.">
        <title>Araport11: a complete reannotation of the Arabidopsis thaliana reference genome.</title>
        <authorList>
            <person name="Cheng C.Y."/>
            <person name="Krishnakumar V."/>
            <person name="Chan A.P."/>
            <person name="Thibaud-Nissen F."/>
            <person name="Schobel S."/>
            <person name="Town C.D."/>
        </authorList>
    </citation>
    <scope>GENOME REANNOTATION</scope>
    <source>
        <strain>cv. Columbia</strain>
    </source>
</reference>
<reference key="3">
    <citation type="journal article" date="2004" name="Genome Res.">
        <title>Whole genome sequence comparisons and 'full-length' cDNA sequences: a combined approach to evaluate and improve Arabidopsis genome annotation.</title>
        <authorList>
            <person name="Castelli V."/>
            <person name="Aury J.-M."/>
            <person name="Jaillon O."/>
            <person name="Wincker P."/>
            <person name="Clepet C."/>
            <person name="Menard M."/>
            <person name="Cruaud C."/>
            <person name="Quetier F."/>
            <person name="Scarpelli C."/>
            <person name="Schaechter V."/>
            <person name="Temple G."/>
            <person name="Caboche M."/>
            <person name="Weissenbach J."/>
            <person name="Salanoubat M."/>
        </authorList>
    </citation>
    <scope>NUCLEOTIDE SEQUENCE [LARGE SCALE MRNA] OF 527-634</scope>
    <source>
        <strain>cv. Columbia</strain>
    </source>
</reference>
<reference key="4">
    <citation type="journal article" date="2004" name="Plant Cell">
        <title>Genome-wide analysis of Arabidopsis pentatricopeptide repeat proteins reveals their essential role in organelle biogenesis.</title>
        <authorList>
            <person name="Lurin C."/>
            <person name="Andres C."/>
            <person name="Aubourg S."/>
            <person name="Bellaoui M."/>
            <person name="Bitton F."/>
            <person name="Bruyere C."/>
            <person name="Caboche M."/>
            <person name="Debast C."/>
            <person name="Gualberto J."/>
            <person name="Hoffmann B."/>
            <person name="Lecharny A."/>
            <person name="Le Ret M."/>
            <person name="Martin-Magniette M.-L."/>
            <person name="Mireau H."/>
            <person name="Peeters N."/>
            <person name="Renou J.-P."/>
            <person name="Szurek B."/>
            <person name="Taconnat L."/>
            <person name="Small I."/>
        </authorList>
    </citation>
    <scope>GENE FAMILY</scope>
</reference>